<reference key="1">
    <citation type="journal article" date="2011" name="Stand. Genomic Sci.">
        <title>Complete genome sequence of Rhodospirillum rubrum type strain (S1).</title>
        <authorList>
            <person name="Munk A.C."/>
            <person name="Copeland A."/>
            <person name="Lucas S."/>
            <person name="Lapidus A."/>
            <person name="Del Rio T.G."/>
            <person name="Barry K."/>
            <person name="Detter J.C."/>
            <person name="Hammon N."/>
            <person name="Israni S."/>
            <person name="Pitluck S."/>
            <person name="Brettin T."/>
            <person name="Bruce D."/>
            <person name="Han C."/>
            <person name="Tapia R."/>
            <person name="Gilna P."/>
            <person name="Schmutz J."/>
            <person name="Larimer F."/>
            <person name="Land M."/>
            <person name="Kyrpides N.C."/>
            <person name="Mavromatis K."/>
            <person name="Richardson P."/>
            <person name="Rohde M."/>
            <person name="Goeker M."/>
            <person name="Klenk H.P."/>
            <person name="Zhang Y."/>
            <person name="Roberts G.P."/>
            <person name="Reslewic S."/>
            <person name="Schwartz D.C."/>
        </authorList>
    </citation>
    <scope>NUCLEOTIDE SEQUENCE [LARGE SCALE GENOMIC DNA]</scope>
    <source>
        <strain>ATCC 11170 / ATH 1.1.1 / DSM 467 / LMG 4362 / NCIMB 8255 / S1</strain>
    </source>
</reference>
<reference key="2">
    <citation type="journal article" date="1980" name="Z. Naturforsch. C Biosci.">
        <title>Pyrophosphate-dependent D-fructose-6-phosphate-phosphotransferase in Rhodospirillaceae.</title>
        <authorList>
            <person name="Pfleiderer C."/>
            <person name="Klemme J.H."/>
        </authorList>
    </citation>
    <scope>FUNCTION</scope>
    <scope>CATALYTIC ACTIVITY</scope>
    <scope>BIOPHYSICOCHEMICAL PROPERTIES</scope>
    <scope>COFACTOR</scope>
    <scope>SUBUNIT</scope>
</reference>
<dbReference type="EC" id="2.7.1.90" evidence="1"/>
<dbReference type="EMBL" id="CP000230">
    <property type="protein sequence ID" value="ABC24201.1"/>
    <property type="molecule type" value="Genomic_DNA"/>
</dbReference>
<dbReference type="RefSeq" id="WP_011391154.1">
    <property type="nucleotide sequence ID" value="NC_007643.1"/>
</dbReference>
<dbReference type="RefSeq" id="YP_428488.1">
    <property type="nucleotide sequence ID" value="NC_007643.1"/>
</dbReference>
<dbReference type="SMR" id="Q2RNU4"/>
<dbReference type="STRING" id="269796.Rru_A3407"/>
<dbReference type="EnsemblBacteria" id="ABC24201">
    <property type="protein sequence ID" value="ABC24201"/>
    <property type="gene ID" value="Rru_A3407"/>
</dbReference>
<dbReference type="KEGG" id="rru:Rru_A3407"/>
<dbReference type="PATRIC" id="fig|269796.9.peg.3523"/>
<dbReference type="eggNOG" id="COG0205">
    <property type="taxonomic scope" value="Bacteria"/>
</dbReference>
<dbReference type="HOGENOM" id="CLU_020655_1_1_5"/>
<dbReference type="PhylomeDB" id="Q2RNU4"/>
<dbReference type="UniPathway" id="UPA00109">
    <property type="reaction ID" value="UER00182"/>
</dbReference>
<dbReference type="Proteomes" id="UP000001929">
    <property type="component" value="Chromosome"/>
</dbReference>
<dbReference type="GO" id="GO:0005737">
    <property type="term" value="C:cytoplasm"/>
    <property type="evidence" value="ECO:0007669"/>
    <property type="project" value="UniProtKB-SubCell"/>
</dbReference>
<dbReference type="GO" id="GO:0003872">
    <property type="term" value="F:6-phosphofructokinase activity"/>
    <property type="evidence" value="ECO:0007669"/>
    <property type="project" value="UniProtKB-UniRule"/>
</dbReference>
<dbReference type="GO" id="GO:0047334">
    <property type="term" value="F:diphosphate-fructose-6-phosphate 1-phosphotransferase activity"/>
    <property type="evidence" value="ECO:0007669"/>
    <property type="project" value="UniProtKB-EC"/>
</dbReference>
<dbReference type="GO" id="GO:0046872">
    <property type="term" value="F:metal ion binding"/>
    <property type="evidence" value="ECO:0007669"/>
    <property type="project" value="UniProtKB-KW"/>
</dbReference>
<dbReference type="GO" id="GO:0006002">
    <property type="term" value="P:fructose 6-phosphate metabolic process"/>
    <property type="evidence" value="ECO:0007669"/>
    <property type="project" value="InterPro"/>
</dbReference>
<dbReference type="Gene3D" id="3.40.50.450">
    <property type="match status" value="1"/>
</dbReference>
<dbReference type="Gene3D" id="3.40.50.460">
    <property type="entry name" value="Phosphofructokinase domain"/>
    <property type="match status" value="1"/>
</dbReference>
<dbReference type="HAMAP" id="MF_01978">
    <property type="entry name" value="Phosphofructokinase_II_B2"/>
    <property type="match status" value="1"/>
</dbReference>
<dbReference type="InterPro" id="IPR022953">
    <property type="entry name" value="ATP_PFK"/>
</dbReference>
<dbReference type="InterPro" id="IPR050929">
    <property type="entry name" value="PFKA"/>
</dbReference>
<dbReference type="InterPro" id="IPR000023">
    <property type="entry name" value="Phosphofructokinase_dom"/>
</dbReference>
<dbReference type="InterPro" id="IPR035966">
    <property type="entry name" value="PKF_sf"/>
</dbReference>
<dbReference type="InterPro" id="IPR011404">
    <property type="entry name" value="PPi-PFK"/>
</dbReference>
<dbReference type="NCBIfam" id="NF010675">
    <property type="entry name" value="PRK14072.1"/>
    <property type="match status" value="1"/>
</dbReference>
<dbReference type="PANTHER" id="PTHR45770">
    <property type="entry name" value="ATP-DEPENDENT 6-PHOSPHOFRUCTOKINASE 1"/>
    <property type="match status" value="1"/>
</dbReference>
<dbReference type="Pfam" id="PF00365">
    <property type="entry name" value="PFK"/>
    <property type="match status" value="1"/>
</dbReference>
<dbReference type="PIRSF" id="PIRSF036483">
    <property type="entry name" value="PFK_XF0274"/>
    <property type="match status" value="1"/>
</dbReference>
<dbReference type="PRINTS" id="PR00476">
    <property type="entry name" value="PHFRCTKINASE"/>
</dbReference>
<dbReference type="SUPFAM" id="SSF53784">
    <property type="entry name" value="Phosphofructokinase"/>
    <property type="match status" value="1"/>
</dbReference>
<proteinExistence type="evidence at protein level"/>
<organism>
    <name type="scientific">Rhodospirillum rubrum (strain ATCC 11170 / ATH 1.1.1 / DSM 467 / LMG 4362 / NCIMB 8255 / S1)</name>
    <dbReference type="NCBI Taxonomy" id="269796"/>
    <lineage>
        <taxon>Bacteria</taxon>
        <taxon>Pseudomonadati</taxon>
        <taxon>Pseudomonadota</taxon>
        <taxon>Alphaproteobacteria</taxon>
        <taxon>Rhodospirillales</taxon>
        <taxon>Rhodospirillaceae</taxon>
        <taxon>Rhodospirillum</taxon>
    </lineage>
</organism>
<gene>
    <name evidence="1" type="primary">pfp</name>
    <name type="ordered locus">Rru_A3407</name>
</gene>
<feature type="chain" id="PRO_0000429698" description="Pyrophosphate--fructose 6-phosphate 1-phosphotransferase">
    <location>
        <begin position="1"/>
        <end position="404"/>
    </location>
</feature>
<feature type="active site" description="Proton acceptor" evidence="1">
    <location>
        <position position="138"/>
    </location>
</feature>
<feature type="binding site" evidence="1">
    <location>
        <position position="13"/>
    </location>
    <ligand>
        <name>diphosphate</name>
        <dbReference type="ChEBI" id="CHEBI:33019"/>
    </ligand>
</feature>
<feature type="binding site" evidence="1">
    <location>
        <position position="108"/>
    </location>
    <ligand>
        <name>Mg(2+)</name>
        <dbReference type="ChEBI" id="CHEBI:18420"/>
        <note>catalytic</note>
    </ligand>
</feature>
<feature type="binding site" evidence="1">
    <location>
        <begin position="136"/>
        <end position="138"/>
    </location>
    <ligand>
        <name>substrate</name>
    </ligand>
</feature>
<feature type="binding site" evidence="1">
    <location>
        <begin position="180"/>
        <end position="182"/>
    </location>
    <ligand>
        <name>substrate</name>
    </ligand>
</feature>
<feature type="binding site" evidence="1">
    <location>
        <position position="237"/>
    </location>
    <ligand>
        <name>substrate</name>
    </ligand>
</feature>
<feature type="binding site" evidence="1">
    <location>
        <begin position="295"/>
        <end position="298"/>
    </location>
    <ligand>
        <name>substrate</name>
    </ligand>
</feature>
<feature type="site" description="Important for catalytic activity and substrate specificity; stabilizes the transition state when the phosphoryl donor is PPi; prevents ATP from binding by mimicking the alpha-phosphate group of ATP" evidence="1">
    <location>
        <position position="109"/>
    </location>
</feature>
<feature type="site" description="Important for catalytic activity; stabilizes the transition state when the phosphoryl donor is PPi" evidence="1">
    <location>
        <position position="135"/>
    </location>
</feature>
<comment type="function">
    <text evidence="1 2">Catalyzes the phosphorylation of D-fructose 6-phosphate, the first committing step of glycolysis. Uses inorganic phosphate (PPi) as phosphoryl donor instead of ATP like common ATP-dependent phosphofructokinases (ATP-PFKs), which renders the reaction reversible, and can thus function both in glycolysis and gluconeogenesis. Consistently, PPi-PFK can replace the enzymes of both the forward (ATP-PFK) and reverse (fructose-bisphosphatase (FBPase)) reactions.</text>
</comment>
<comment type="catalytic activity">
    <reaction evidence="1 2">
        <text>beta-D-fructose 6-phosphate + diphosphate = beta-D-fructose 1,6-bisphosphate + phosphate + H(+)</text>
        <dbReference type="Rhea" id="RHEA:13613"/>
        <dbReference type="ChEBI" id="CHEBI:15378"/>
        <dbReference type="ChEBI" id="CHEBI:32966"/>
        <dbReference type="ChEBI" id="CHEBI:33019"/>
        <dbReference type="ChEBI" id="CHEBI:43474"/>
        <dbReference type="ChEBI" id="CHEBI:57634"/>
        <dbReference type="EC" id="2.7.1.90"/>
    </reaction>
</comment>
<comment type="cofactor">
    <cofactor evidence="1 2">
        <name>Mg(2+)</name>
        <dbReference type="ChEBI" id="CHEBI:18420"/>
    </cofactor>
</comment>
<comment type="activity regulation">
    <text evidence="1">Non-allosteric.</text>
</comment>
<comment type="biophysicochemical properties">
    <kinetics>
        <KM evidence="2">0.82 mM for phosphate</KM>
        <KM evidence="2">0.025 mM for diphosphate</KM>
        <KM evidence="2">0.38 mM for fructose 6-phosphate</KM>
        <KM evidence="2">0.02 mM for fructose 1,6-bisphosphate</KM>
        <Vmax evidence="2">20.0 umol/min/mg enzyme for the forward reaction</Vmax>
        <Vmax evidence="2">24.2 umol/min/mg enzyme for the reverse reaction</Vmax>
    </kinetics>
    <phDependence>
        <text evidence="2">Optimum pH is 7.2 for the forward reaction and 8.6 for the revesre reaction.</text>
    </phDependence>
</comment>
<comment type="pathway">
    <text evidence="1">Carbohydrate degradation; glycolysis; D-glyceraldehyde 3-phosphate and glycerone phosphate from D-glucose: step 3/4.</text>
</comment>
<comment type="subunit">
    <text evidence="1 2">Homodimer.</text>
</comment>
<comment type="subcellular location">
    <subcellularLocation>
        <location evidence="1">Cytoplasm</location>
    </subcellularLocation>
</comment>
<comment type="similarity">
    <text evidence="1">Belongs to the phosphofructokinase type A (PFKA) family. PPi-dependent PFK group II subfamily. Clade 'B2' sub-subfamily.</text>
</comment>
<evidence type="ECO:0000255" key="1">
    <source>
        <dbReference type="HAMAP-Rule" id="MF_01978"/>
    </source>
</evidence>
<evidence type="ECO:0000269" key="2">
    <source>
    </source>
</evidence>
<protein>
    <recommendedName>
        <fullName evidence="1">Pyrophosphate--fructose 6-phosphate 1-phosphotransferase</fullName>
        <ecNumber evidence="1">2.7.1.90</ecNumber>
    </recommendedName>
    <alternativeName>
        <fullName evidence="1">6-phosphofructokinase, pyrophosphate dependent</fullName>
    </alternativeName>
    <alternativeName>
        <fullName evidence="1">PPi-dependent phosphofructokinase</fullName>
        <shortName evidence="1">PPi-PFK</shortName>
    </alternativeName>
    <alternativeName>
        <fullName evidence="1">Pyrophosphate-dependent 6-phosphofructose-1-kinase</fullName>
    </alternativeName>
</protein>
<name>PFP_RHORT</name>
<accession>Q2RNU4</accession>
<sequence>MFKGKVVVAQGGGPTAVINQSMVGAVLESRKFRNVELVYGAVHGVRGIVDEHFLDLTQETTHNLEMVAETPSSALGSTREKPDLKYCQEIFKVLKAHEIGYFFYIGGNDSSDTVRIVSEEAAKADYGLRCIHIPKTIDNDLVVNDHTPGFPSAARFVAQAFSGVNLDNQALPGVYIGVVMGRHAGFLTAASALGKKFQDDGPHLIYLPERTFDVDTFVSDVKEVYDRTGRCIVAVSEGIHDASGEPIITKLAEEVERDAHGNVQLSGTGALADLLVSVVKKKSGIKRVRGDTLGYLQRSFVGCVSDVDQREAREVGEKAVQYAMWGQTNGSVTIHRTGFYSVDYQLTPLLDVAGKTRTMPDSFIAANGHDVTTDFLMYLRPLLGRGMPDAYRLRDNRVAKVLNR</sequence>
<keyword id="KW-0963">Cytoplasm</keyword>
<keyword id="KW-0324">Glycolysis</keyword>
<keyword id="KW-0418">Kinase</keyword>
<keyword id="KW-0460">Magnesium</keyword>
<keyword id="KW-0479">Metal-binding</keyword>
<keyword id="KW-1185">Reference proteome</keyword>
<keyword id="KW-0808">Transferase</keyword>